<name>APAG_SHIFL</name>
<proteinExistence type="inferred from homology"/>
<reference key="1">
    <citation type="journal article" date="2002" name="Nucleic Acids Res.">
        <title>Genome sequence of Shigella flexneri 2a: insights into pathogenicity through comparison with genomes of Escherichia coli K12 and O157.</title>
        <authorList>
            <person name="Jin Q."/>
            <person name="Yuan Z."/>
            <person name="Xu J."/>
            <person name="Wang Y."/>
            <person name="Shen Y."/>
            <person name="Lu W."/>
            <person name="Wang J."/>
            <person name="Liu H."/>
            <person name="Yang J."/>
            <person name="Yang F."/>
            <person name="Zhang X."/>
            <person name="Zhang J."/>
            <person name="Yang G."/>
            <person name="Wu H."/>
            <person name="Qu D."/>
            <person name="Dong J."/>
            <person name="Sun L."/>
            <person name="Xue Y."/>
            <person name="Zhao A."/>
            <person name="Gao Y."/>
            <person name="Zhu J."/>
            <person name="Kan B."/>
            <person name="Ding K."/>
            <person name="Chen S."/>
            <person name="Cheng H."/>
            <person name="Yao Z."/>
            <person name="He B."/>
            <person name="Chen R."/>
            <person name="Ma D."/>
            <person name="Qiang B."/>
            <person name="Wen Y."/>
            <person name="Hou Y."/>
            <person name="Yu J."/>
        </authorList>
    </citation>
    <scope>NUCLEOTIDE SEQUENCE [LARGE SCALE GENOMIC DNA]</scope>
    <source>
        <strain>301 / Serotype 2a</strain>
    </source>
</reference>
<reference key="2">
    <citation type="journal article" date="2003" name="Infect. Immun.">
        <title>Complete genome sequence and comparative genomics of Shigella flexneri serotype 2a strain 2457T.</title>
        <authorList>
            <person name="Wei J."/>
            <person name="Goldberg M.B."/>
            <person name="Burland V."/>
            <person name="Venkatesan M.M."/>
            <person name="Deng W."/>
            <person name="Fournier G."/>
            <person name="Mayhew G.F."/>
            <person name="Plunkett G. III"/>
            <person name="Rose D.J."/>
            <person name="Darling A."/>
            <person name="Mau B."/>
            <person name="Perna N.T."/>
            <person name="Payne S.M."/>
            <person name="Runyen-Janecky L.J."/>
            <person name="Zhou S."/>
            <person name="Schwartz D.C."/>
            <person name="Blattner F.R."/>
        </authorList>
    </citation>
    <scope>NUCLEOTIDE SEQUENCE [LARGE SCALE GENOMIC DNA]</scope>
    <source>
        <strain>ATCC 700930 / 2457T / Serotype 2a</strain>
    </source>
</reference>
<protein>
    <recommendedName>
        <fullName>Protein ApaG</fullName>
    </recommendedName>
</protein>
<organism>
    <name type="scientific">Shigella flexneri</name>
    <dbReference type="NCBI Taxonomy" id="623"/>
    <lineage>
        <taxon>Bacteria</taxon>
        <taxon>Pseudomonadati</taxon>
        <taxon>Pseudomonadota</taxon>
        <taxon>Gammaproteobacteria</taxon>
        <taxon>Enterobacterales</taxon>
        <taxon>Enterobacteriaceae</taxon>
        <taxon>Shigella</taxon>
    </lineage>
</organism>
<dbReference type="EMBL" id="AE005674">
    <property type="protein sequence ID" value="AAN41713.1"/>
    <property type="molecule type" value="Genomic_DNA"/>
</dbReference>
<dbReference type="EMBL" id="AE014073">
    <property type="protein sequence ID" value="AAP15593.1"/>
    <property type="molecule type" value="Genomic_DNA"/>
</dbReference>
<dbReference type="RefSeq" id="NP_706006.1">
    <property type="nucleotide sequence ID" value="NC_004337.2"/>
</dbReference>
<dbReference type="RefSeq" id="WP_000610901.1">
    <property type="nucleotide sequence ID" value="NZ_WPGW01000005.1"/>
</dbReference>
<dbReference type="SMR" id="P62675"/>
<dbReference type="STRING" id="198214.SF0047"/>
<dbReference type="PaxDb" id="198214-SF0047"/>
<dbReference type="GeneID" id="1024567"/>
<dbReference type="GeneID" id="93777385"/>
<dbReference type="KEGG" id="sfl:SF0047"/>
<dbReference type="KEGG" id="sfx:S0049"/>
<dbReference type="PATRIC" id="fig|198214.7.peg.56"/>
<dbReference type="HOGENOM" id="CLU_128074_0_0_6"/>
<dbReference type="Proteomes" id="UP000001006">
    <property type="component" value="Chromosome"/>
</dbReference>
<dbReference type="Proteomes" id="UP000002673">
    <property type="component" value="Chromosome"/>
</dbReference>
<dbReference type="GO" id="GO:0070987">
    <property type="term" value="P:error-free translesion synthesis"/>
    <property type="evidence" value="ECO:0007669"/>
    <property type="project" value="TreeGrafter"/>
</dbReference>
<dbReference type="Gene3D" id="2.60.40.1470">
    <property type="entry name" value="ApaG domain"/>
    <property type="match status" value="1"/>
</dbReference>
<dbReference type="HAMAP" id="MF_00791">
    <property type="entry name" value="ApaG"/>
    <property type="match status" value="1"/>
</dbReference>
<dbReference type="InterPro" id="IPR007474">
    <property type="entry name" value="ApaG_domain"/>
</dbReference>
<dbReference type="InterPro" id="IPR036767">
    <property type="entry name" value="ApaG_sf"/>
</dbReference>
<dbReference type="InterPro" id="IPR023065">
    <property type="entry name" value="Uncharacterised_ApaG"/>
</dbReference>
<dbReference type="NCBIfam" id="NF003967">
    <property type="entry name" value="PRK05461.1"/>
    <property type="match status" value="1"/>
</dbReference>
<dbReference type="PANTHER" id="PTHR14289">
    <property type="entry name" value="F-BOX ONLY PROTEIN 3"/>
    <property type="match status" value="1"/>
</dbReference>
<dbReference type="PANTHER" id="PTHR14289:SF16">
    <property type="entry name" value="POLYMERASE DELTA-INTERACTING PROTEIN 2"/>
    <property type="match status" value="1"/>
</dbReference>
<dbReference type="Pfam" id="PF04379">
    <property type="entry name" value="DUF525"/>
    <property type="match status" value="1"/>
</dbReference>
<dbReference type="SUPFAM" id="SSF110069">
    <property type="entry name" value="ApaG-like"/>
    <property type="match status" value="1"/>
</dbReference>
<dbReference type="PROSITE" id="PS51087">
    <property type="entry name" value="APAG"/>
    <property type="match status" value="1"/>
</dbReference>
<feature type="chain" id="PRO_0000197964" description="Protein ApaG">
    <location>
        <begin position="1"/>
        <end position="125"/>
    </location>
</feature>
<feature type="domain" description="ApaG">
    <location>
        <begin position="1"/>
        <end position="125"/>
    </location>
</feature>
<sequence>MINSPRVCIQVQSVYIEAQSSPDNERYVFAYTVTIRNLGRAPVQLLGRYWLITNGNGRETEVQGEGVVGVQPLIAPGEEYQYTSGAIIETPLGTMQGHYEMIDENGVPFSIDIPVFRLAVPTLIH</sequence>
<keyword id="KW-1185">Reference proteome</keyword>
<accession>P62675</accession>
<accession>P05636</accession>
<gene>
    <name type="primary">apaG</name>
    <name type="ordered locus">SF0047</name>
    <name type="ordered locus">S0049</name>
</gene>